<proteinExistence type="inferred from homology"/>
<reference key="1">
    <citation type="submission" date="2006-12" db="EMBL/GenBank/DDBJ databases">
        <title>Complete sequence of Halorhodospira halophila SL1.</title>
        <authorList>
            <consortium name="US DOE Joint Genome Institute"/>
            <person name="Copeland A."/>
            <person name="Lucas S."/>
            <person name="Lapidus A."/>
            <person name="Barry K."/>
            <person name="Detter J.C."/>
            <person name="Glavina del Rio T."/>
            <person name="Hammon N."/>
            <person name="Israni S."/>
            <person name="Dalin E."/>
            <person name="Tice H."/>
            <person name="Pitluck S."/>
            <person name="Saunders E."/>
            <person name="Brettin T."/>
            <person name="Bruce D."/>
            <person name="Han C."/>
            <person name="Tapia R."/>
            <person name="Schmutz J."/>
            <person name="Larimer F."/>
            <person name="Land M."/>
            <person name="Hauser L."/>
            <person name="Kyrpides N."/>
            <person name="Mikhailova N."/>
            <person name="Hoff W."/>
            <person name="Richardson P."/>
        </authorList>
    </citation>
    <scope>NUCLEOTIDE SEQUENCE [LARGE SCALE GENOMIC DNA]</scope>
    <source>
        <strain>DSM 244 / SL1</strain>
    </source>
</reference>
<accession>A1WY07</accession>
<keyword id="KW-0028">Amino-acid biosynthesis</keyword>
<keyword id="KW-0057">Aromatic amino acid biosynthesis</keyword>
<keyword id="KW-0413">Isomerase</keyword>
<keyword id="KW-1185">Reference proteome</keyword>
<keyword id="KW-0822">Tryptophan biosynthesis</keyword>
<comment type="catalytic activity">
    <reaction evidence="1">
        <text>N-(5-phospho-beta-D-ribosyl)anthranilate = 1-(2-carboxyphenylamino)-1-deoxy-D-ribulose 5-phosphate</text>
        <dbReference type="Rhea" id="RHEA:21540"/>
        <dbReference type="ChEBI" id="CHEBI:18277"/>
        <dbReference type="ChEBI" id="CHEBI:58613"/>
        <dbReference type="EC" id="5.3.1.24"/>
    </reaction>
</comment>
<comment type="pathway">
    <text evidence="1">Amino-acid biosynthesis; L-tryptophan biosynthesis; L-tryptophan from chorismate: step 3/5.</text>
</comment>
<comment type="similarity">
    <text evidence="1">Belongs to the TrpF family.</text>
</comment>
<evidence type="ECO:0000255" key="1">
    <source>
        <dbReference type="HAMAP-Rule" id="MF_00135"/>
    </source>
</evidence>
<feature type="chain" id="PRO_1000197103" description="N-(5'-phosphoribosyl)anthranilate isomerase">
    <location>
        <begin position="1"/>
        <end position="207"/>
    </location>
</feature>
<organism>
    <name type="scientific">Halorhodospira halophila (strain DSM 244 / SL1)</name>
    <name type="common">Ectothiorhodospira halophila (strain DSM 244 / SL1)</name>
    <dbReference type="NCBI Taxonomy" id="349124"/>
    <lineage>
        <taxon>Bacteria</taxon>
        <taxon>Pseudomonadati</taxon>
        <taxon>Pseudomonadota</taxon>
        <taxon>Gammaproteobacteria</taxon>
        <taxon>Chromatiales</taxon>
        <taxon>Ectothiorhodospiraceae</taxon>
        <taxon>Halorhodospira</taxon>
    </lineage>
</organism>
<gene>
    <name evidence="1" type="primary">trpF</name>
    <name type="ordered locus">Hhal_1805</name>
</gene>
<protein>
    <recommendedName>
        <fullName evidence="1">N-(5'-phosphoribosyl)anthranilate isomerase</fullName>
        <shortName evidence="1">PRAI</shortName>
        <ecNumber evidence="1">5.3.1.24</ecNumber>
    </recommendedName>
</protein>
<name>TRPF_HALHL</name>
<sequence>MRTRVKICGVTRPEDAAAAVELGADAIGLVFCDASPRAVDMKEARAIVAAVPAFVSVVGLFVDPKPGQVEVAVEGLHLDTLQFHGNEAPELCRHYERRYVKAVPMGGGADPSEYVAAYPDASGFLFDSHRVGERGGRGESFDHDTIPGGVRGLTVAGGLSAENVAEVVRKVRPFAVDVSSGVESEPGIKDRERIARFLAEVERGDET</sequence>
<dbReference type="EC" id="5.3.1.24" evidence="1"/>
<dbReference type="EMBL" id="CP000544">
    <property type="protein sequence ID" value="ABM62569.1"/>
    <property type="molecule type" value="Genomic_DNA"/>
</dbReference>
<dbReference type="RefSeq" id="WP_011814591.1">
    <property type="nucleotide sequence ID" value="NC_008789.1"/>
</dbReference>
<dbReference type="SMR" id="A1WY07"/>
<dbReference type="STRING" id="349124.Hhal_1805"/>
<dbReference type="KEGG" id="hha:Hhal_1805"/>
<dbReference type="eggNOG" id="COG0135">
    <property type="taxonomic scope" value="Bacteria"/>
</dbReference>
<dbReference type="HOGENOM" id="CLU_076364_2_0_6"/>
<dbReference type="OrthoDB" id="9796196at2"/>
<dbReference type="UniPathway" id="UPA00035">
    <property type="reaction ID" value="UER00042"/>
</dbReference>
<dbReference type="Proteomes" id="UP000000647">
    <property type="component" value="Chromosome"/>
</dbReference>
<dbReference type="GO" id="GO:0004640">
    <property type="term" value="F:phosphoribosylanthranilate isomerase activity"/>
    <property type="evidence" value="ECO:0007669"/>
    <property type="project" value="UniProtKB-UniRule"/>
</dbReference>
<dbReference type="GO" id="GO:0000162">
    <property type="term" value="P:L-tryptophan biosynthetic process"/>
    <property type="evidence" value="ECO:0007669"/>
    <property type="project" value="UniProtKB-UniRule"/>
</dbReference>
<dbReference type="CDD" id="cd00405">
    <property type="entry name" value="PRAI"/>
    <property type="match status" value="1"/>
</dbReference>
<dbReference type="Gene3D" id="3.20.20.70">
    <property type="entry name" value="Aldolase class I"/>
    <property type="match status" value="1"/>
</dbReference>
<dbReference type="HAMAP" id="MF_00135">
    <property type="entry name" value="PRAI"/>
    <property type="match status" value="1"/>
</dbReference>
<dbReference type="InterPro" id="IPR013785">
    <property type="entry name" value="Aldolase_TIM"/>
</dbReference>
<dbReference type="InterPro" id="IPR001240">
    <property type="entry name" value="PRAI_dom"/>
</dbReference>
<dbReference type="InterPro" id="IPR011060">
    <property type="entry name" value="RibuloseP-bd_barrel"/>
</dbReference>
<dbReference type="InterPro" id="IPR044643">
    <property type="entry name" value="TrpF_fam"/>
</dbReference>
<dbReference type="NCBIfam" id="NF002298">
    <property type="entry name" value="PRK01222.1-4"/>
    <property type="match status" value="1"/>
</dbReference>
<dbReference type="PANTHER" id="PTHR42894">
    <property type="entry name" value="N-(5'-PHOSPHORIBOSYL)ANTHRANILATE ISOMERASE"/>
    <property type="match status" value="1"/>
</dbReference>
<dbReference type="PANTHER" id="PTHR42894:SF1">
    <property type="entry name" value="N-(5'-PHOSPHORIBOSYL)ANTHRANILATE ISOMERASE"/>
    <property type="match status" value="1"/>
</dbReference>
<dbReference type="Pfam" id="PF00697">
    <property type="entry name" value="PRAI"/>
    <property type="match status" value="1"/>
</dbReference>
<dbReference type="SUPFAM" id="SSF51366">
    <property type="entry name" value="Ribulose-phoshate binding barrel"/>
    <property type="match status" value="1"/>
</dbReference>